<gene>
    <name evidence="1" type="primary">cdd</name>
    <name type="ordered locus">YPTB1527</name>
</gene>
<evidence type="ECO:0000255" key="1">
    <source>
        <dbReference type="HAMAP-Rule" id="MF_01558"/>
    </source>
</evidence>
<evidence type="ECO:0000255" key="2">
    <source>
        <dbReference type="PROSITE-ProRule" id="PRU01083"/>
    </source>
</evidence>
<reference key="1">
    <citation type="journal article" date="2004" name="Proc. Natl. Acad. Sci. U.S.A.">
        <title>Insights into the evolution of Yersinia pestis through whole-genome comparison with Yersinia pseudotuberculosis.</title>
        <authorList>
            <person name="Chain P.S.G."/>
            <person name="Carniel E."/>
            <person name="Larimer F.W."/>
            <person name="Lamerdin J."/>
            <person name="Stoutland P.O."/>
            <person name="Regala W.M."/>
            <person name="Georgescu A.M."/>
            <person name="Vergez L.M."/>
            <person name="Land M.L."/>
            <person name="Motin V.L."/>
            <person name="Brubaker R.R."/>
            <person name="Fowler J."/>
            <person name="Hinnebusch J."/>
            <person name="Marceau M."/>
            <person name="Medigue C."/>
            <person name="Simonet M."/>
            <person name="Chenal-Francisque V."/>
            <person name="Souza B."/>
            <person name="Dacheux D."/>
            <person name="Elliott J.M."/>
            <person name="Derbise A."/>
            <person name="Hauser L.J."/>
            <person name="Garcia E."/>
        </authorList>
    </citation>
    <scope>NUCLEOTIDE SEQUENCE [LARGE SCALE GENOMIC DNA]</scope>
    <source>
        <strain>IP32953</strain>
    </source>
</reference>
<name>CDD_YERPS</name>
<feature type="chain" id="PRO_0000171675" description="Cytidine deaminase">
    <location>
        <begin position="1"/>
        <end position="294"/>
    </location>
</feature>
<feature type="domain" description="CMP/dCMP-type deaminase 1" evidence="2">
    <location>
        <begin position="48"/>
        <end position="168"/>
    </location>
</feature>
<feature type="domain" description="CMP/dCMP-type deaminase 2" evidence="2">
    <location>
        <begin position="187"/>
        <end position="294"/>
    </location>
</feature>
<feature type="active site" description="Proton donor" evidence="1">
    <location>
        <position position="104"/>
    </location>
</feature>
<feature type="binding site" evidence="1">
    <location>
        <begin position="89"/>
        <end position="91"/>
    </location>
    <ligand>
        <name>substrate</name>
    </ligand>
</feature>
<feature type="binding site" evidence="1">
    <location>
        <position position="102"/>
    </location>
    <ligand>
        <name>Zn(2+)</name>
        <dbReference type="ChEBI" id="CHEBI:29105"/>
        <note>catalytic</note>
    </ligand>
</feature>
<feature type="binding site" evidence="1">
    <location>
        <position position="129"/>
    </location>
    <ligand>
        <name>Zn(2+)</name>
        <dbReference type="ChEBI" id="CHEBI:29105"/>
        <note>catalytic</note>
    </ligand>
</feature>
<feature type="binding site" evidence="1">
    <location>
        <position position="132"/>
    </location>
    <ligand>
        <name>Zn(2+)</name>
        <dbReference type="ChEBI" id="CHEBI:29105"/>
        <note>catalytic</note>
    </ligand>
</feature>
<dbReference type="EC" id="3.5.4.5" evidence="1"/>
<dbReference type="EMBL" id="BX936398">
    <property type="protein sequence ID" value="CAH20766.1"/>
    <property type="molecule type" value="Genomic_DNA"/>
</dbReference>
<dbReference type="RefSeq" id="WP_011192106.1">
    <property type="nucleotide sequence ID" value="NC_006155.1"/>
</dbReference>
<dbReference type="SMR" id="Q66C79"/>
<dbReference type="KEGG" id="ypo:BZ17_988"/>
<dbReference type="KEGG" id="yps:YPTB1527"/>
<dbReference type="PATRIC" id="fig|273123.14.peg.1048"/>
<dbReference type="Proteomes" id="UP000001011">
    <property type="component" value="Chromosome"/>
</dbReference>
<dbReference type="GO" id="GO:0005829">
    <property type="term" value="C:cytosol"/>
    <property type="evidence" value="ECO:0007669"/>
    <property type="project" value="TreeGrafter"/>
</dbReference>
<dbReference type="GO" id="GO:0004126">
    <property type="term" value="F:cytidine deaminase activity"/>
    <property type="evidence" value="ECO:0007669"/>
    <property type="project" value="UniProtKB-UniRule"/>
</dbReference>
<dbReference type="GO" id="GO:0042802">
    <property type="term" value="F:identical protein binding"/>
    <property type="evidence" value="ECO:0007669"/>
    <property type="project" value="UniProtKB-ARBA"/>
</dbReference>
<dbReference type="GO" id="GO:0008270">
    <property type="term" value="F:zinc ion binding"/>
    <property type="evidence" value="ECO:0007669"/>
    <property type="project" value="UniProtKB-UniRule"/>
</dbReference>
<dbReference type="GO" id="GO:0009972">
    <property type="term" value="P:cytidine deamination"/>
    <property type="evidence" value="ECO:0007669"/>
    <property type="project" value="InterPro"/>
</dbReference>
<dbReference type="CDD" id="cd01283">
    <property type="entry name" value="cytidine_deaminase"/>
    <property type="match status" value="2"/>
</dbReference>
<dbReference type="FunFam" id="3.40.140.10:FF:000006">
    <property type="entry name" value="Cytidine deaminase"/>
    <property type="match status" value="1"/>
</dbReference>
<dbReference type="FunFam" id="3.40.140.10:FF:000007">
    <property type="entry name" value="Cytidine deaminase"/>
    <property type="match status" value="1"/>
</dbReference>
<dbReference type="Gene3D" id="3.40.140.10">
    <property type="entry name" value="Cytidine Deaminase, domain 2"/>
    <property type="match status" value="2"/>
</dbReference>
<dbReference type="HAMAP" id="MF_01558">
    <property type="entry name" value="Cyt_deam"/>
    <property type="match status" value="1"/>
</dbReference>
<dbReference type="InterPro" id="IPR016192">
    <property type="entry name" value="APOBEC/CMP_deaminase_Zn-bd"/>
</dbReference>
<dbReference type="InterPro" id="IPR002125">
    <property type="entry name" value="CMP_dCMP_dom"/>
</dbReference>
<dbReference type="InterPro" id="IPR013171">
    <property type="entry name" value="Cyd/dCyd_deaminase_Zn-bd"/>
</dbReference>
<dbReference type="InterPro" id="IPR050202">
    <property type="entry name" value="Cyt/Deoxycyt_deaminase"/>
</dbReference>
<dbReference type="InterPro" id="IPR006263">
    <property type="entry name" value="Cyt_deam_dimer"/>
</dbReference>
<dbReference type="InterPro" id="IPR016193">
    <property type="entry name" value="Cytidine_deaminase-like"/>
</dbReference>
<dbReference type="InterPro" id="IPR020797">
    <property type="entry name" value="Cytidine_deaminase_bacteria"/>
</dbReference>
<dbReference type="NCBIfam" id="TIGR01355">
    <property type="entry name" value="cyt_deam_dimer"/>
    <property type="match status" value="1"/>
</dbReference>
<dbReference type="NCBIfam" id="NF006537">
    <property type="entry name" value="PRK09027.1"/>
    <property type="match status" value="1"/>
</dbReference>
<dbReference type="PANTHER" id="PTHR11644">
    <property type="entry name" value="CYTIDINE DEAMINASE"/>
    <property type="match status" value="1"/>
</dbReference>
<dbReference type="PANTHER" id="PTHR11644:SF2">
    <property type="entry name" value="CYTIDINE DEAMINASE"/>
    <property type="match status" value="1"/>
</dbReference>
<dbReference type="Pfam" id="PF00383">
    <property type="entry name" value="dCMP_cyt_deam_1"/>
    <property type="match status" value="1"/>
</dbReference>
<dbReference type="Pfam" id="PF08211">
    <property type="entry name" value="dCMP_cyt_deam_2"/>
    <property type="match status" value="1"/>
</dbReference>
<dbReference type="PIRSF" id="PIRSF006334">
    <property type="entry name" value="Cdd_plus_pseudo"/>
    <property type="match status" value="1"/>
</dbReference>
<dbReference type="SUPFAM" id="SSF53927">
    <property type="entry name" value="Cytidine deaminase-like"/>
    <property type="match status" value="2"/>
</dbReference>
<dbReference type="PROSITE" id="PS00903">
    <property type="entry name" value="CYT_DCMP_DEAMINASES_1"/>
    <property type="match status" value="1"/>
</dbReference>
<dbReference type="PROSITE" id="PS51747">
    <property type="entry name" value="CYT_DCMP_DEAMINASES_2"/>
    <property type="match status" value="2"/>
</dbReference>
<sequence>MQARFHTSWAELPASLQFALEPILSAENFPAMLTAEQVKTVKNISGLDDDALAFALLPLATACALTPISHFNVGAIARGKSGNFYFGANMEFRGVPLQQTIHAEQCAVTHAWLRGETNLVAITVNYTPCGHCRQFMNELNCGSELHIHLPGRPPSTLGQYLPDSFGPTDLAITTLLMDPVNHGYTLAETDPLTQAALNAANHSHAPYSQSHSGVALETTNGKIYAGRYAENAAFNPSLPPLQAALILANITGENCASIRRAVLVEGHNAVTSQWDTTLATLNALGCSAVKRVTF</sequence>
<protein>
    <recommendedName>
        <fullName evidence="1">Cytidine deaminase</fullName>
        <ecNumber evidence="1">3.5.4.5</ecNumber>
    </recommendedName>
    <alternativeName>
        <fullName evidence="1">Cytidine aminohydrolase</fullName>
        <shortName evidence="1">CDA</shortName>
    </alternativeName>
</protein>
<proteinExistence type="inferred from homology"/>
<organism>
    <name type="scientific">Yersinia pseudotuberculosis serotype I (strain IP32953)</name>
    <dbReference type="NCBI Taxonomy" id="273123"/>
    <lineage>
        <taxon>Bacteria</taxon>
        <taxon>Pseudomonadati</taxon>
        <taxon>Pseudomonadota</taxon>
        <taxon>Gammaproteobacteria</taxon>
        <taxon>Enterobacterales</taxon>
        <taxon>Yersiniaceae</taxon>
        <taxon>Yersinia</taxon>
    </lineage>
</organism>
<keyword id="KW-0378">Hydrolase</keyword>
<keyword id="KW-0479">Metal-binding</keyword>
<keyword id="KW-0862">Zinc</keyword>
<accession>Q66C79</accession>
<comment type="function">
    <text evidence="1">This enzyme scavenges exogenous and endogenous cytidine and 2'-deoxycytidine for UMP synthesis.</text>
</comment>
<comment type="catalytic activity">
    <reaction evidence="1">
        <text>cytidine + H2O + H(+) = uridine + NH4(+)</text>
        <dbReference type="Rhea" id="RHEA:16069"/>
        <dbReference type="ChEBI" id="CHEBI:15377"/>
        <dbReference type="ChEBI" id="CHEBI:15378"/>
        <dbReference type="ChEBI" id="CHEBI:16704"/>
        <dbReference type="ChEBI" id="CHEBI:17562"/>
        <dbReference type="ChEBI" id="CHEBI:28938"/>
        <dbReference type="EC" id="3.5.4.5"/>
    </reaction>
</comment>
<comment type="catalytic activity">
    <reaction evidence="1">
        <text>2'-deoxycytidine + H2O + H(+) = 2'-deoxyuridine + NH4(+)</text>
        <dbReference type="Rhea" id="RHEA:13433"/>
        <dbReference type="ChEBI" id="CHEBI:15377"/>
        <dbReference type="ChEBI" id="CHEBI:15378"/>
        <dbReference type="ChEBI" id="CHEBI:15698"/>
        <dbReference type="ChEBI" id="CHEBI:16450"/>
        <dbReference type="ChEBI" id="CHEBI:28938"/>
        <dbReference type="EC" id="3.5.4.5"/>
    </reaction>
</comment>
<comment type="cofactor">
    <cofactor evidence="1">
        <name>Zn(2+)</name>
        <dbReference type="ChEBI" id="CHEBI:29105"/>
    </cofactor>
    <text evidence="1">Binds 1 zinc ion.</text>
</comment>
<comment type="subunit">
    <text evidence="1">Homodimer.</text>
</comment>
<comment type="similarity">
    <text evidence="1">Belongs to the cytidine and deoxycytidylate deaminase family.</text>
</comment>